<accession>Q2JLJ5</accession>
<name>PNP_SYNJB</name>
<sequence length="712" mass="77892">MAEYTRSISFYGREIDINIGLMAPQAGCGVWLTSGETSILVTATRQPGRPGVDFMPLLVDYEERLYAAGRIPGGYLRREGRPPERATLISRLIDRPIRPLFPEWLRDDVQVVATTLSVDDTVPPDVLCILGASLAIHGARIPFNGPVAAVRVGLVKDEFILNPTYAEIEAGDLDLVVAGCADGVIMVEAGANQLPEKDVVEAIEFGFEAIQELLKAQQQVLADLNITPVELPPPPKNEELIAFVEEQAQEGIRSILRQFLDKTSREQQLEELKAKLEAQIQERPEGDPLRLYLLENPKELDNQFKALLKKLMRQQILQEGVRVDGRKLDEVRPVSCRVGLIPRVHGSALFNRGLTQVLSITTLGTPGDAQELDDLHPVDEKRYMHHYNFPGFSVGETRPSRSPGRREIGHGALAERALVPVLPKEEEFPYVVRVVSEVLSSNGSTSMGSVCGSTLSLMDAGVPIKAPVSGVAMGLIKEGDEVRILTDIQGIEDFLGDMDFKVAGTRAGITALQMDMKITGITVDVVEQAIRQAKAGREFILDKMLETIAAPRPQLAKTAPRLLTFKVDPEDIGKIIGPGGKTVRGITEATGAKVDISDDGTITVSSSVGGQAEAARAMIENLVRRVEEGQVYLGKVTRIIPIGAFVEFLPGKEGMIHISQLAEYRVGRVEDEVAVEDEVVVKVRSIDHKGRINLTRLGISPEEAARVRNHHH</sequence>
<proteinExistence type="inferred from homology"/>
<reference key="1">
    <citation type="journal article" date="2007" name="ISME J.">
        <title>Population level functional diversity in a microbial community revealed by comparative genomic and metagenomic analyses.</title>
        <authorList>
            <person name="Bhaya D."/>
            <person name="Grossman A.R."/>
            <person name="Steunou A.-S."/>
            <person name="Khuri N."/>
            <person name="Cohan F.M."/>
            <person name="Hamamura N."/>
            <person name="Melendrez M.C."/>
            <person name="Bateson M.M."/>
            <person name="Ward D.M."/>
            <person name="Heidelberg J.F."/>
        </authorList>
    </citation>
    <scope>NUCLEOTIDE SEQUENCE [LARGE SCALE GENOMIC DNA]</scope>
    <source>
        <strain>JA-2-3B'a(2-13)</strain>
    </source>
</reference>
<evidence type="ECO:0000255" key="1">
    <source>
        <dbReference type="HAMAP-Rule" id="MF_01595"/>
    </source>
</evidence>
<protein>
    <recommendedName>
        <fullName evidence="1">Polyribonucleotide nucleotidyltransferase</fullName>
        <ecNumber evidence="1">2.7.7.8</ecNumber>
    </recommendedName>
    <alternativeName>
        <fullName evidence="1">Polynucleotide phosphorylase</fullName>
        <shortName evidence="1">PNPase</shortName>
    </alternativeName>
</protein>
<keyword id="KW-0963">Cytoplasm</keyword>
<keyword id="KW-0460">Magnesium</keyword>
<keyword id="KW-0479">Metal-binding</keyword>
<keyword id="KW-0548">Nucleotidyltransferase</keyword>
<keyword id="KW-1185">Reference proteome</keyword>
<keyword id="KW-0694">RNA-binding</keyword>
<keyword id="KW-0808">Transferase</keyword>
<comment type="function">
    <text evidence="1">Involved in mRNA degradation. Catalyzes the phosphorolysis of single-stranded polyribonucleotides processively in the 3'- to 5'-direction.</text>
</comment>
<comment type="catalytic activity">
    <reaction evidence="1">
        <text>RNA(n+1) + phosphate = RNA(n) + a ribonucleoside 5'-diphosphate</text>
        <dbReference type="Rhea" id="RHEA:22096"/>
        <dbReference type="Rhea" id="RHEA-COMP:14527"/>
        <dbReference type="Rhea" id="RHEA-COMP:17342"/>
        <dbReference type="ChEBI" id="CHEBI:43474"/>
        <dbReference type="ChEBI" id="CHEBI:57930"/>
        <dbReference type="ChEBI" id="CHEBI:140395"/>
        <dbReference type="EC" id="2.7.7.8"/>
    </reaction>
</comment>
<comment type="cofactor">
    <cofactor evidence="1">
        <name>Mg(2+)</name>
        <dbReference type="ChEBI" id="CHEBI:18420"/>
    </cofactor>
</comment>
<comment type="subcellular location">
    <subcellularLocation>
        <location evidence="1">Cytoplasm</location>
    </subcellularLocation>
</comment>
<comment type="similarity">
    <text evidence="1">Belongs to the polyribonucleotide nucleotidyltransferase family.</text>
</comment>
<feature type="chain" id="PRO_0000329899" description="Polyribonucleotide nucleotidyltransferase">
    <location>
        <begin position="1"/>
        <end position="712"/>
    </location>
</feature>
<feature type="domain" description="KH" evidence="1">
    <location>
        <begin position="560"/>
        <end position="619"/>
    </location>
</feature>
<feature type="domain" description="S1 motif" evidence="1">
    <location>
        <begin position="629"/>
        <end position="697"/>
    </location>
</feature>
<feature type="binding site" evidence="1">
    <location>
        <position position="493"/>
    </location>
    <ligand>
        <name>Mg(2+)</name>
        <dbReference type="ChEBI" id="CHEBI:18420"/>
    </ligand>
</feature>
<feature type="binding site" evidence="1">
    <location>
        <position position="499"/>
    </location>
    <ligand>
        <name>Mg(2+)</name>
        <dbReference type="ChEBI" id="CHEBI:18420"/>
    </ligand>
</feature>
<organism>
    <name type="scientific">Synechococcus sp. (strain JA-2-3B'a(2-13))</name>
    <name type="common">Cyanobacteria bacterium Yellowstone B-Prime</name>
    <dbReference type="NCBI Taxonomy" id="321332"/>
    <lineage>
        <taxon>Bacteria</taxon>
        <taxon>Bacillati</taxon>
        <taxon>Cyanobacteriota</taxon>
        <taxon>Cyanophyceae</taxon>
        <taxon>Synechococcales</taxon>
        <taxon>Synechococcaceae</taxon>
        <taxon>Synechococcus</taxon>
    </lineage>
</organism>
<dbReference type="EC" id="2.7.7.8" evidence="1"/>
<dbReference type="EMBL" id="CP000240">
    <property type="protein sequence ID" value="ABD02412.1"/>
    <property type="molecule type" value="Genomic_DNA"/>
</dbReference>
<dbReference type="RefSeq" id="WP_011433060.1">
    <property type="nucleotide sequence ID" value="NC_007776.1"/>
</dbReference>
<dbReference type="SMR" id="Q2JLJ5"/>
<dbReference type="STRING" id="321332.CYB_1445"/>
<dbReference type="KEGG" id="cyb:CYB_1445"/>
<dbReference type="eggNOG" id="COG1185">
    <property type="taxonomic scope" value="Bacteria"/>
</dbReference>
<dbReference type="HOGENOM" id="CLU_004217_2_2_3"/>
<dbReference type="OrthoDB" id="9804305at2"/>
<dbReference type="Proteomes" id="UP000001938">
    <property type="component" value="Chromosome"/>
</dbReference>
<dbReference type="GO" id="GO:0005829">
    <property type="term" value="C:cytosol"/>
    <property type="evidence" value="ECO:0007669"/>
    <property type="project" value="TreeGrafter"/>
</dbReference>
<dbReference type="GO" id="GO:0000175">
    <property type="term" value="F:3'-5'-RNA exonuclease activity"/>
    <property type="evidence" value="ECO:0007669"/>
    <property type="project" value="TreeGrafter"/>
</dbReference>
<dbReference type="GO" id="GO:0000287">
    <property type="term" value="F:magnesium ion binding"/>
    <property type="evidence" value="ECO:0007669"/>
    <property type="project" value="UniProtKB-UniRule"/>
</dbReference>
<dbReference type="GO" id="GO:0004654">
    <property type="term" value="F:polyribonucleotide nucleotidyltransferase activity"/>
    <property type="evidence" value="ECO:0007669"/>
    <property type="project" value="UniProtKB-UniRule"/>
</dbReference>
<dbReference type="GO" id="GO:0003723">
    <property type="term" value="F:RNA binding"/>
    <property type="evidence" value="ECO:0007669"/>
    <property type="project" value="UniProtKB-UniRule"/>
</dbReference>
<dbReference type="GO" id="GO:0006402">
    <property type="term" value="P:mRNA catabolic process"/>
    <property type="evidence" value="ECO:0007669"/>
    <property type="project" value="UniProtKB-UniRule"/>
</dbReference>
<dbReference type="GO" id="GO:0006396">
    <property type="term" value="P:RNA processing"/>
    <property type="evidence" value="ECO:0007669"/>
    <property type="project" value="InterPro"/>
</dbReference>
<dbReference type="CDD" id="cd02393">
    <property type="entry name" value="KH-I_PNPase"/>
    <property type="match status" value="1"/>
</dbReference>
<dbReference type="CDD" id="cd11363">
    <property type="entry name" value="RNase_PH_PNPase_1"/>
    <property type="match status" value="1"/>
</dbReference>
<dbReference type="CDD" id="cd11364">
    <property type="entry name" value="RNase_PH_PNPase_2"/>
    <property type="match status" value="1"/>
</dbReference>
<dbReference type="FunFam" id="3.30.1370.10:FF:000001">
    <property type="entry name" value="Polyribonucleotide nucleotidyltransferase"/>
    <property type="match status" value="1"/>
</dbReference>
<dbReference type="FunFam" id="3.30.230.70:FF:000001">
    <property type="entry name" value="Polyribonucleotide nucleotidyltransferase"/>
    <property type="match status" value="1"/>
</dbReference>
<dbReference type="FunFam" id="3.30.230.70:FF:000002">
    <property type="entry name" value="Polyribonucleotide nucleotidyltransferase"/>
    <property type="match status" value="1"/>
</dbReference>
<dbReference type="Gene3D" id="3.30.230.70">
    <property type="entry name" value="GHMP Kinase, N-terminal domain"/>
    <property type="match status" value="2"/>
</dbReference>
<dbReference type="Gene3D" id="3.30.1370.10">
    <property type="entry name" value="K Homology domain, type 1"/>
    <property type="match status" value="1"/>
</dbReference>
<dbReference type="Gene3D" id="2.40.50.140">
    <property type="entry name" value="Nucleic acid-binding proteins"/>
    <property type="match status" value="1"/>
</dbReference>
<dbReference type="HAMAP" id="MF_01595">
    <property type="entry name" value="PNPase"/>
    <property type="match status" value="1"/>
</dbReference>
<dbReference type="InterPro" id="IPR001247">
    <property type="entry name" value="ExoRNase_PH_dom1"/>
</dbReference>
<dbReference type="InterPro" id="IPR015847">
    <property type="entry name" value="ExoRNase_PH_dom2"/>
</dbReference>
<dbReference type="InterPro" id="IPR036345">
    <property type="entry name" value="ExoRNase_PH_dom2_sf"/>
</dbReference>
<dbReference type="InterPro" id="IPR004087">
    <property type="entry name" value="KH_dom"/>
</dbReference>
<dbReference type="InterPro" id="IPR004088">
    <property type="entry name" value="KH_dom_type_1"/>
</dbReference>
<dbReference type="InterPro" id="IPR036612">
    <property type="entry name" value="KH_dom_type_1_sf"/>
</dbReference>
<dbReference type="InterPro" id="IPR012340">
    <property type="entry name" value="NA-bd_OB-fold"/>
</dbReference>
<dbReference type="InterPro" id="IPR012162">
    <property type="entry name" value="PNPase"/>
</dbReference>
<dbReference type="InterPro" id="IPR027408">
    <property type="entry name" value="PNPase/RNase_PH_dom_sf"/>
</dbReference>
<dbReference type="InterPro" id="IPR015848">
    <property type="entry name" value="PNPase_PH_RNA-bd_bac/org-type"/>
</dbReference>
<dbReference type="InterPro" id="IPR036456">
    <property type="entry name" value="PNPase_PH_RNA-bd_sf"/>
</dbReference>
<dbReference type="InterPro" id="IPR020568">
    <property type="entry name" value="Ribosomal_Su5_D2-typ_SF"/>
</dbReference>
<dbReference type="InterPro" id="IPR003029">
    <property type="entry name" value="S1_domain"/>
</dbReference>
<dbReference type="NCBIfam" id="TIGR03591">
    <property type="entry name" value="polynuc_phos"/>
    <property type="match status" value="1"/>
</dbReference>
<dbReference type="NCBIfam" id="NF008805">
    <property type="entry name" value="PRK11824.1"/>
    <property type="match status" value="1"/>
</dbReference>
<dbReference type="PANTHER" id="PTHR11252">
    <property type="entry name" value="POLYRIBONUCLEOTIDE NUCLEOTIDYLTRANSFERASE"/>
    <property type="match status" value="1"/>
</dbReference>
<dbReference type="PANTHER" id="PTHR11252:SF0">
    <property type="entry name" value="POLYRIBONUCLEOTIDE NUCLEOTIDYLTRANSFERASE 1, MITOCHONDRIAL"/>
    <property type="match status" value="1"/>
</dbReference>
<dbReference type="Pfam" id="PF00013">
    <property type="entry name" value="KH_1"/>
    <property type="match status" value="1"/>
</dbReference>
<dbReference type="Pfam" id="PF03726">
    <property type="entry name" value="PNPase"/>
    <property type="match status" value="1"/>
</dbReference>
<dbReference type="Pfam" id="PF01138">
    <property type="entry name" value="RNase_PH"/>
    <property type="match status" value="2"/>
</dbReference>
<dbReference type="Pfam" id="PF03725">
    <property type="entry name" value="RNase_PH_C"/>
    <property type="match status" value="2"/>
</dbReference>
<dbReference type="Pfam" id="PF00575">
    <property type="entry name" value="S1"/>
    <property type="match status" value="1"/>
</dbReference>
<dbReference type="PIRSF" id="PIRSF005499">
    <property type="entry name" value="PNPase"/>
    <property type="match status" value="1"/>
</dbReference>
<dbReference type="SMART" id="SM00322">
    <property type="entry name" value="KH"/>
    <property type="match status" value="1"/>
</dbReference>
<dbReference type="SMART" id="SM00316">
    <property type="entry name" value="S1"/>
    <property type="match status" value="1"/>
</dbReference>
<dbReference type="SUPFAM" id="SSF54791">
    <property type="entry name" value="Eukaryotic type KH-domain (KH-domain type I)"/>
    <property type="match status" value="1"/>
</dbReference>
<dbReference type="SUPFAM" id="SSF50249">
    <property type="entry name" value="Nucleic acid-binding proteins"/>
    <property type="match status" value="1"/>
</dbReference>
<dbReference type="SUPFAM" id="SSF46915">
    <property type="entry name" value="Polynucleotide phosphorylase/guanosine pentaphosphate synthase (PNPase/GPSI), domain 3"/>
    <property type="match status" value="1"/>
</dbReference>
<dbReference type="SUPFAM" id="SSF55666">
    <property type="entry name" value="Ribonuclease PH domain 2-like"/>
    <property type="match status" value="2"/>
</dbReference>
<dbReference type="SUPFAM" id="SSF54211">
    <property type="entry name" value="Ribosomal protein S5 domain 2-like"/>
    <property type="match status" value="2"/>
</dbReference>
<dbReference type="PROSITE" id="PS50084">
    <property type="entry name" value="KH_TYPE_1"/>
    <property type="match status" value="1"/>
</dbReference>
<dbReference type="PROSITE" id="PS50126">
    <property type="entry name" value="S1"/>
    <property type="match status" value="1"/>
</dbReference>
<gene>
    <name evidence="1" type="primary">pnp</name>
    <name type="ordered locus">CYB_1445</name>
</gene>